<gene>
    <name evidence="1" type="primary">pdxJ</name>
    <name type="ordered locus">XAC0012</name>
</gene>
<protein>
    <recommendedName>
        <fullName evidence="1">Pyridoxine 5'-phosphate synthase</fullName>
        <shortName evidence="1">PNP synthase</shortName>
        <ecNumber evidence="1">2.6.99.2</ecNumber>
    </recommendedName>
</protein>
<organism>
    <name type="scientific">Xanthomonas axonopodis pv. citri (strain 306)</name>
    <dbReference type="NCBI Taxonomy" id="190486"/>
    <lineage>
        <taxon>Bacteria</taxon>
        <taxon>Pseudomonadati</taxon>
        <taxon>Pseudomonadota</taxon>
        <taxon>Gammaproteobacteria</taxon>
        <taxon>Lysobacterales</taxon>
        <taxon>Lysobacteraceae</taxon>
        <taxon>Xanthomonas</taxon>
    </lineage>
</organism>
<dbReference type="EC" id="2.6.99.2" evidence="1"/>
<dbReference type="EMBL" id="AE008923">
    <property type="protein sequence ID" value="AAM34904.1"/>
    <property type="molecule type" value="Genomic_DNA"/>
</dbReference>
<dbReference type="RefSeq" id="WP_011050023.1">
    <property type="nucleotide sequence ID" value="NC_003919.1"/>
</dbReference>
<dbReference type="SMR" id="Q8PRF1"/>
<dbReference type="KEGG" id="xac:XAC0012"/>
<dbReference type="eggNOG" id="COG0854">
    <property type="taxonomic scope" value="Bacteria"/>
</dbReference>
<dbReference type="HOGENOM" id="CLU_074563_1_0_6"/>
<dbReference type="UniPathway" id="UPA00244">
    <property type="reaction ID" value="UER00313"/>
</dbReference>
<dbReference type="Proteomes" id="UP000000576">
    <property type="component" value="Chromosome"/>
</dbReference>
<dbReference type="GO" id="GO:0005829">
    <property type="term" value="C:cytosol"/>
    <property type="evidence" value="ECO:0007669"/>
    <property type="project" value="TreeGrafter"/>
</dbReference>
<dbReference type="GO" id="GO:0033856">
    <property type="term" value="F:pyridoxine 5'-phosphate synthase activity"/>
    <property type="evidence" value="ECO:0007669"/>
    <property type="project" value="UniProtKB-EC"/>
</dbReference>
<dbReference type="GO" id="GO:0008615">
    <property type="term" value="P:pyridoxine biosynthetic process"/>
    <property type="evidence" value="ECO:0007669"/>
    <property type="project" value="UniProtKB-UniRule"/>
</dbReference>
<dbReference type="FunFam" id="3.20.20.70:FF:000150">
    <property type="entry name" value="Pyridoxine 5'-phosphate synthase"/>
    <property type="match status" value="1"/>
</dbReference>
<dbReference type="Gene3D" id="3.20.20.70">
    <property type="entry name" value="Aldolase class I"/>
    <property type="match status" value="1"/>
</dbReference>
<dbReference type="HAMAP" id="MF_00279">
    <property type="entry name" value="PdxJ"/>
    <property type="match status" value="1"/>
</dbReference>
<dbReference type="InterPro" id="IPR013785">
    <property type="entry name" value="Aldolase_TIM"/>
</dbReference>
<dbReference type="InterPro" id="IPR004569">
    <property type="entry name" value="PyrdxlP_synth_PdxJ"/>
</dbReference>
<dbReference type="InterPro" id="IPR036130">
    <property type="entry name" value="Pyridoxine-5'_phos_synth"/>
</dbReference>
<dbReference type="NCBIfam" id="TIGR00559">
    <property type="entry name" value="pdxJ"/>
    <property type="match status" value="1"/>
</dbReference>
<dbReference type="NCBIfam" id="NF003626">
    <property type="entry name" value="PRK05265.1-4"/>
    <property type="match status" value="1"/>
</dbReference>
<dbReference type="PANTHER" id="PTHR30456">
    <property type="entry name" value="PYRIDOXINE 5'-PHOSPHATE SYNTHASE"/>
    <property type="match status" value="1"/>
</dbReference>
<dbReference type="PANTHER" id="PTHR30456:SF0">
    <property type="entry name" value="PYRIDOXINE 5'-PHOSPHATE SYNTHASE"/>
    <property type="match status" value="1"/>
</dbReference>
<dbReference type="Pfam" id="PF03740">
    <property type="entry name" value="PdxJ"/>
    <property type="match status" value="1"/>
</dbReference>
<dbReference type="SUPFAM" id="SSF63892">
    <property type="entry name" value="Pyridoxine 5'-phosphate synthase"/>
    <property type="match status" value="1"/>
</dbReference>
<reference key="1">
    <citation type="journal article" date="2002" name="Nature">
        <title>Comparison of the genomes of two Xanthomonas pathogens with differing host specificities.</title>
        <authorList>
            <person name="da Silva A.C.R."/>
            <person name="Ferro J.A."/>
            <person name="Reinach F.C."/>
            <person name="Farah C.S."/>
            <person name="Furlan L.R."/>
            <person name="Quaggio R.B."/>
            <person name="Monteiro-Vitorello C.B."/>
            <person name="Van Sluys M.A."/>
            <person name="Almeida N.F. Jr."/>
            <person name="Alves L.M.C."/>
            <person name="do Amaral A.M."/>
            <person name="Bertolini M.C."/>
            <person name="Camargo L.E.A."/>
            <person name="Camarotte G."/>
            <person name="Cannavan F."/>
            <person name="Cardozo J."/>
            <person name="Chambergo F."/>
            <person name="Ciapina L.P."/>
            <person name="Cicarelli R.M.B."/>
            <person name="Coutinho L.L."/>
            <person name="Cursino-Santos J.R."/>
            <person name="El-Dorry H."/>
            <person name="Faria J.B."/>
            <person name="Ferreira A.J.S."/>
            <person name="Ferreira R.C.C."/>
            <person name="Ferro M.I.T."/>
            <person name="Formighieri E.F."/>
            <person name="Franco M.C."/>
            <person name="Greggio C.C."/>
            <person name="Gruber A."/>
            <person name="Katsuyama A.M."/>
            <person name="Kishi L.T."/>
            <person name="Leite R.P."/>
            <person name="Lemos E.G.M."/>
            <person name="Lemos M.V.F."/>
            <person name="Locali E.C."/>
            <person name="Machado M.A."/>
            <person name="Madeira A.M.B.N."/>
            <person name="Martinez-Rossi N.M."/>
            <person name="Martins E.C."/>
            <person name="Meidanis J."/>
            <person name="Menck C.F.M."/>
            <person name="Miyaki C.Y."/>
            <person name="Moon D.H."/>
            <person name="Moreira L.M."/>
            <person name="Novo M.T.M."/>
            <person name="Okura V.K."/>
            <person name="Oliveira M.C."/>
            <person name="Oliveira V.R."/>
            <person name="Pereira H.A."/>
            <person name="Rossi A."/>
            <person name="Sena J.A.D."/>
            <person name="Silva C."/>
            <person name="de Souza R.F."/>
            <person name="Spinola L.A.F."/>
            <person name="Takita M.A."/>
            <person name="Tamura R.E."/>
            <person name="Teixeira E.C."/>
            <person name="Tezza R.I.D."/>
            <person name="Trindade dos Santos M."/>
            <person name="Truffi D."/>
            <person name="Tsai S.M."/>
            <person name="White F.F."/>
            <person name="Setubal J.C."/>
            <person name="Kitajima J.P."/>
        </authorList>
    </citation>
    <scope>NUCLEOTIDE SEQUENCE [LARGE SCALE GENOMIC DNA]</scope>
    <source>
        <strain>306</strain>
    </source>
</reference>
<accession>Q8PRF1</accession>
<name>PDXJ_XANAC</name>
<proteinExistence type="inferred from homology"/>
<feature type="chain" id="PRO_0000190140" description="Pyridoxine 5'-phosphate synthase">
    <location>
        <begin position="1"/>
        <end position="255"/>
    </location>
</feature>
<feature type="active site" description="Proton acceptor" evidence="1">
    <location>
        <position position="44"/>
    </location>
</feature>
<feature type="active site" description="Proton acceptor" evidence="1">
    <location>
        <position position="74"/>
    </location>
</feature>
<feature type="active site" description="Proton donor" evidence="1">
    <location>
        <position position="202"/>
    </location>
</feature>
<feature type="binding site" evidence="1">
    <location>
        <position position="8"/>
    </location>
    <ligand>
        <name>3-amino-2-oxopropyl phosphate</name>
        <dbReference type="ChEBI" id="CHEBI:57279"/>
    </ligand>
</feature>
<feature type="binding site" evidence="1">
    <location>
        <position position="19"/>
    </location>
    <ligand>
        <name>3-amino-2-oxopropyl phosphate</name>
        <dbReference type="ChEBI" id="CHEBI:57279"/>
    </ligand>
</feature>
<feature type="binding site" evidence="1">
    <location>
        <position position="46"/>
    </location>
    <ligand>
        <name>1-deoxy-D-xylulose 5-phosphate</name>
        <dbReference type="ChEBI" id="CHEBI:57792"/>
    </ligand>
</feature>
<feature type="binding site" evidence="1">
    <location>
        <position position="51"/>
    </location>
    <ligand>
        <name>1-deoxy-D-xylulose 5-phosphate</name>
        <dbReference type="ChEBI" id="CHEBI:57792"/>
    </ligand>
</feature>
<feature type="binding site" evidence="1">
    <location>
        <position position="111"/>
    </location>
    <ligand>
        <name>1-deoxy-D-xylulose 5-phosphate</name>
        <dbReference type="ChEBI" id="CHEBI:57792"/>
    </ligand>
</feature>
<feature type="binding site" evidence="1">
    <location>
        <position position="203"/>
    </location>
    <ligand>
        <name>3-amino-2-oxopropyl phosphate</name>
        <dbReference type="ChEBI" id="CHEBI:57279"/>
    </ligand>
</feature>
<feature type="binding site" evidence="1">
    <location>
        <begin position="225"/>
        <end position="226"/>
    </location>
    <ligand>
        <name>3-amino-2-oxopropyl phosphate</name>
        <dbReference type="ChEBI" id="CHEBI:57279"/>
    </ligand>
</feature>
<feature type="site" description="Transition state stabilizer" evidence="1">
    <location>
        <position position="162"/>
    </location>
</feature>
<keyword id="KW-0963">Cytoplasm</keyword>
<keyword id="KW-0664">Pyridoxine biosynthesis</keyword>
<keyword id="KW-0808">Transferase</keyword>
<sequence length="255" mass="26665">MTTQLSVNVNKIAVLRNSRGGADPDVVQAARACIAAGAHGITVHPRPDQRHIRADDVLALSALTREHGVEFNIEGNPFAPPRGDYPGLLQLCRATRPEQVTLVPDGDGQLTSDHGFDFAQDTVQLAELITAFKRLGSRVSLFVDAGNPDIARAATLGADRIELYTGPYAHAHASGQADTALALFANAAQRASAAGLGINAGHDLSQANLGDFLAAVPGVLEVSIGHALISEALYQGLDASVRAYVDILRSGHVSA</sequence>
<evidence type="ECO:0000255" key="1">
    <source>
        <dbReference type="HAMAP-Rule" id="MF_00279"/>
    </source>
</evidence>
<comment type="function">
    <text evidence="1">Catalyzes the complicated ring closure reaction between the two acyclic compounds 1-deoxy-D-xylulose-5-phosphate (DXP) and 3-amino-2-oxopropyl phosphate (1-amino-acetone-3-phosphate or AAP) to form pyridoxine 5'-phosphate (PNP) and inorganic phosphate.</text>
</comment>
<comment type="catalytic activity">
    <reaction evidence="1">
        <text>3-amino-2-oxopropyl phosphate + 1-deoxy-D-xylulose 5-phosphate = pyridoxine 5'-phosphate + phosphate + 2 H2O + H(+)</text>
        <dbReference type="Rhea" id="RHEA:15265"/>
        <dbReference type="ChEBI" id="CHEBI:15377"/>
        <dbReference type="ChEBI" id="CHEBI:15378"/>
        <dbReference type="ChEBI" id="CHEBI:43474"/>
        <dbReference type="ChEBI" id="CHEBI:57279"/>
        <dbReference type="ChEBI" id="CHEBI:57792"/>
        <dbReference type="ChEBI" id="CHEBI:58589"/>
        <dbReference type="EC" id="2.6.99.2"/>
    </reaction>
</comment>
<comment type="pathway">
    <text evidence="1">Cofactor biosynthesis; pyridoxine 5'-phosphate biosynthesis; pyridoxine 5'-phosphate from D-erythrose 4-phosphate: step 5/5.</text>
</comment>
<comment type="subunit">
    <text evidence="1">Homooctamer; tetramer of dimers.</text>
</comment>
<comment type="subcellular location">
    <subcellularLocation>
        <location evidence="1">Cytoplasm</location>
    </subcellularLocation>
</comment>
<comment type="similarity">
    <text evidence="1">Belongs to the PNP synthase family.</text>
</comment>